<accession>Q8IZF7</accession>
<accession>Q2PNZ1</accession>
<accession>Q86SL6</accession>
<accession>Q8NGU5</accession>
<accession>Q8TDT5</accession>
<protein>
    <recommendedName>
        <fullName>Putative adhesion G protein-coupled receptor F2P</fullName>
    </recommendedName>
    <alternativeName>
        <fullName>Adhesion G-protein coupled receptor F2</fullName>
    </alternativeName>
    <alternativeName>
        <fullName>G-protein coupled receptor 111</fullName>
    </alternativeName>
    <alternativeName>
        <fullName>G-protein coupled receptor PGR20</fullName>
    </alternativeName>
</protein>
<organism>
    <name type="scientific">Homo sapiens</name>
    <name type="common">Human</name>
    <dbReference type="NCBI Taxonomy" id="9606"/>
    <lineage>
        <taxon>Eukaryota</taxon>
        <taxon>Metazoa</taxon>
        <taxon>Chordata</taxon>
        <taxon>Craniata</taxon>
        <taxon>Vertebrata</taxon>
        <taxon>Euteleostomi</taxon>
        <taxon>Mammalia</taxon>
        <taxon>Eutheria</taxon>
        <taxon>Euarchontoglires</taxon>
        <taxon>Primates</taxon>
        <taxon>Haplorrhini</taxon>
        <taxon>Catarrhini</taxon>
        <taxon>Hominidae</taxon>
        <taxon>Homo</taxon>
    </lineage>
</organism>
<sequence length="708" mass="78569">MGLTAYGNRRVQPGELPFGANLTLIHTRAQPVICSKLLLTKRVSPISFFLSKFQNSWGEDGWVQLDQLPSPNAVSSDQVHCSAGCTHRKCGWAASKSKEKVPARPHGVCDGVCTDYSQCTQPCPPDTQGNMGFSCRQKTWHKITDTCQTLNALNIFEEDSRLVQPFEDNIKISVYTGKSETITDMLLQKCPTDLSCVIRNIQQSPWIPGNIAVIVQLLHNISTAIWTGVDEAKMQSYSTIANHILNSKSISNWTFIPDRNSSYILLHSVNSFARRLFIDKHPVDISDVFIHTMGTTISGDNIGKNFTFSMRINDTSNEVTGRVLISRDELRKVPSPSQVISIAFPTIGAILEASLLENVTVNGLVLSAILPKELKRISLIFEKISKSEERRTQCVGWHSVENRWDQQACKMIQENSQQAVCKCRPSKLFTSFSILMSPHILESLILTYITYVGLGISICSLILCLSIEVLVWSQVTKTEITYLRHVCIVNIAATLLMADVWFIVASFLSGPITHHKGCVAATFFVHFFYLSVFFWMLAKALLILYGIMIVFHTLPKSVLVASLFSVGYGCPLAIAAITVAATEPGKGYLRPEICWLNWDMTKALLAFVIPALAIVVVNLITVTLVIVKTQRAAIGNSMFQEVRAIVRISKNIAILTPLLGLTWGFGVATVIDDRSLAFHIIFSLLNAFQVSPDASDQVQSERIHEDVL</sequence>
<dbReference type="EMBL" id="AY140953">
    <property type="protein sequence ID" value="AAN46667.1"/>
    <property type="molecule type" value="mRNA"/>
</dbReference>
<dbReference type="EMBL" id="AB065684">
    <property type="protein sequence ID" value="BAC05907.1"/>
    <property type="status" value="ALT_SEQ"/>
    <property type="molecule type" value="Genomic_DNA"/>
</dbReference>
<dbReference type="EMBL" id="DQ315369">
    <property type="protein sequence ID" value="ABC41928.1"/>
    <property type="molecule type" value="mRNA"/>
</dbReference>
<dbReference type="EMBL" id="AL356421">
    <property type="status" value="NOT_ANNOTATED_CDS"/>
    <property type="molecule type" value="Genomic_DNA"/>
</dbReference>
<dbReference type="EMBL" id="AB083617">
    <property type="protein sequence ID" value="BAB89330.1"/>
    <property type="molecule type" value="Genomic_DNA"/>
</dbReference>
<dbReference type="EMBL" id="AY255612">
    <property type="protein sequence ID" value="AAO85124.1"/>
    <property type="molecule type" value="mRNA"/>
</dbReference>
<dbReference type="RefSeq" id="NP_722581.4">
    <property type="nucleotide sequence ID" value="NM_153839.6"/>
</dbReference>
<dbReference type="SMR" id="Q8IZF7"/>
<dbReference type="BioGRID" id="128806">
    <property type="interactions" value="1"/>
</dbReference>
<dbReference type="IntAct" id="Q8IZF7">
    <property type="interactions" value="1"/>
</dbReference>
<dbReference type="STRING" id="9606.ENSP00000296862"/>
<dbReference type="ChEMBL" id="CHEMBL4523892"/>
<dbReference type="GlyCosmos" id="Q8IZF7">
    <property type="glycosylation" value="7 sites, No reported glycans"/>
</dbReference>
<dbReference type="GlyGen" id="Q8IZF7">
    <property type="glycosylation" value="7 sites"/>
</dbReference>
<dbReference type="iPTMnet" id="Q8IZF7"/>
<dbReference type="PhosphoSitePlus" id="Q8IZF7"/>
<dbReference type="BioMuta" id="ADGRF2"/>
<dbReference type="DMDM" id="59797952"/>
<dbReference type="jPOST" id="Q8IZF7"/>
<dbReference type="MassIVE" id="Q8IZF7"/>
<dbReference type="PaxDb" id="9606-ENSP00000296862"/>
<dbReference type="ProteomicsDB" id="71348">
    <molecule id="Q8IZF7-1"/>
</dbReference>
<dbReference type="Antibodypedia" id="30795">
    <property type="antibodies" value="101 antibodies from 21 providers"/>
</dbReference>
<dbReference type="DNASU" id="222611"/>
<dbReference type="UCSC" id="uc003oyy.3">
    <molecule id="Q8IZF7-1"/>
    <property type="organism name" value="human"/>
</dbReference>
<dbReference type="AGR" id="HGNC:18991"/>
<dbReference type="DisGeNET" id="222611"/>
<dbReference type="GeneCards" id="ADGRF2P"/>
<dbReference type="HGNC" id="HGNC:18991">
    <property type="gene designation" value="ADGRF2P"/>
</dbReference>
<dbReference type="MIM" id="620872">
    <property type="type" value="gene"/>
</dbReference>
<dbReference type="neXtProt" id="NX_Q8IZF7"/>
<dbReference type="PharmGKB" id="PA134984088"/>
<dbReference type="VEuPathDB" id="HostDB:ENSG00000164393"/>
<dbReference type="eggNOG" id="KOG4193">
    <property type="taxonomic scope" value="Eukaryota"/>
</dbReference>
<dbReference type="HOGENOM" id="CLU_002753_3_6_1"/>
<dbReference type="InParanoid" id="Q8IZF7"/>
<dbReference type="OMA" id="MLMQKCP"/>
<dbReference type="PAN-GO" id="Q8IZF7">
    <property type="GO annotations" value="2 GO annotations based on evolutionary models"/>
</dbReference>
<dbReference type="PhylomeDB" id="Q8IZF7"/>
<dbReference type="TreeFam" id="TF316380"/>
<dbReference type="PathwayCommons" id="Q8IZF7"/>
<dbReference type="SignaLink" id="Q8IZF7"/>
<dbReference type="BioGRID-ORCS" id="222611">
    <property type="hits" value="4 hits in 261 CRISPR screens"/>
</dbReference>
<dbReference type="ChiTaRS" id="ADGRF2">
    <property type="organism name" value="human"/>
</dbReference>
<dbReference type="GeneWiki" id="GPR111"/>
<dbReference type="GenomeRNAi" id="222611"/>
<dbReference type="Pharos" id="Q8IZF7">
    <property type="development level" value="Tdark"/>
</dbReference>
<dbReference type="PRO" id="PR:Q8IZF7"/>
<dbReference type="Proteomes" id="UP000005640">
    <property type="component" value="Chromosome 6"/>
</dbReference>
<dbReference type="RNAct" id="Q8IZF7">
    <property type="molecule type" value="protein"/>
</dbReference>
<dbReference type="Bgee" id="ENSG00000164393">
    <property type="expression patterns" value="Expressed in male germ line stem cell (sensu Vertebrata) in testis and 45 other cell types or tissues"/>
</dbReference>
<dbReference type="ExpressionAtlas" id="Q8IZF7">
    <property type="expression patterns" value="baseline and differential"/>
</dbReference>
<dbReference type="GO" id="GO:0016020">
    <property type="term" value="C:membrane"/>
    <property type="evidence" value="ECO:0000304"/>
    <property type="project" value="GDB"/>
</dbReference>
<dbReference type="GO" id="GO:0004930">
    <property type="term" value="F:G protein-coupled receptor activity"/>
    <property type="evidence" value="ECO:0000318"/>
    <property type="project" value="GO_Central"/>
</dbReference>
<dbReference type="GO" id="GO:0007189">
    <property type="term" value="P:adenylate cyclase-activating G protein-coupled receptor signaling pathway"/>
    <property type="evidence" value="ECO:0000318"/>
    <property type="project" value="GO_Central"/>
</dbReference>
<dbReference type="GO" id="GO:0007166">
    <property type="term" value="P:cell surface receptor signaling pathway"/>
    <property type="evidence" value="ECO:0007669"/>
    <property type="project" value="InterPro"/>
</dbReference>
<dbReference type="GO" id="GO:0007186">
    <property type="term" value="P:G protein-coupled receptor signaling pathway"/>
    <property type="evidence" value="ECO:0000304"/>
    <property type="project" value="GDB"/>
</dbReference>
<dbReference type="CDD" id="cd15994">
    <property type="entry name" value="7tmB2_GPR111_115"/>
    <property type="match status" value="1"/>
</dbReference>
<dbReference type="FunFam" id="2.60.220.50:FF:000015">
    <property type="entry name" value="Adhesion G protein-coupled receptor F4"/>
    <property type="match status" value="1"/>
</dbReference>
<dbReference type="FunFam" id="1.20.1070.10:FF:000058">
    <property type="entry name" value="Adhesion G protein-coupled receptor F5"/>
    <property type="match status" value="1"/>
</dbReference>
<dbReference type="Gene3D" id="2.60.220.50">
    <property type="match status" value="1"/>
</dbReference>
<dbReference type="Gene3D" id="1.20.1070.10">
    <property type="entry name" value="Rhodopsin 7-helix transmembrane proteins"/>
    <property type="match status" value="1"/>
</dbReference>
<dbReference type="InterPro" id="IPR051587">
    <property type="entry name" value="Adhesion_GPCR"/>
</dbReference>
<dbReference type="InterPro" id="IPR057244">
    <property type="entry name" value="GAIN_B"/>
</dbReference>
<dbReference type="InterPro" id="IPR046338">
    <property type="entry name" value="GAIN_dom_sf"/>
</dbReference>
<dbReference type="InterPro" id="IPR017981">
    <property type="entry name" value="GPCR_2-like_7TM"/>
</dbReference>
<dbReference type="InterPro" id="IPR000832">
    <property type="entry name" value="GPCR_2_secretin-like"/>
</dbReference>
<dbReference type="InterPro" id="IPR000203">
    <property type="entry name" value="GPS"/>
</dbReference>
<dbReference type="PANTHER" id="PTHR45813:SF6">
    <property type="entry name" value="ADHESION G-PROTEIN COUPLED RECEPTOR F2"/>
    <property type="match status" value="1"/>
</dbReference>
<dbReference type="PANTHER" id="PTHR45813">
    <property type="entry name" value="IG-LIKE DOMAIN-CONTAINING PROTEIN"/>
    <property type="match status" value="1"/>
</dbReference>
<dbReference type="Pfam" id="PF00002">
    <property type="entry name" value="7tm_2"/>
    <property type="match status" value="1"/>
</dbReference>
<dbReference type="Pfam" id="PF01825">
    <property type="entry name" value="GPS"/>
    <property type="match status" value="1"/>
</dbReference>
<dbReference type="PRINTS" id="PR00249">
    <property type="entry name" value="GPCRSECRETIN"/>
</dbReference>
<dbReference type="PROSITE" id="PS50261">
    <property type="entry name" value="G_PROTEIN_RECEP_F2_4"/>
    <property type="match status" value="1"/>
</dbReference>
<dbReference type="PROSITE" id="PS50221">
    <property type="entry name" value="GAIN_B"/>
    <property type="match status" value="1"/>
</dbReference>
<comment type="function">
    <text>Orphan receptor.</text>
</comment>
<comment type="subcellular location">
    <subcellularLocation>
        <location evidence="2">Membrane</location>
        <topology evidence="2">Multi-pass membrane protein</topology>
    </subcellularLocation>
</comment>
<comment type="alternative products">
    <event type="alternative splicing"/>
    <isoform>
        <id>Q8IZF7-1</id>
        <name>1</name>
        <sequence type="displayed"/>
    </isoform>
    <isoform>
        <id>Q8IZF7-2</id>
        <name>2</name>
        <sequence type="described" ref="VSP_040379 VSP_040380 VSP_040381"/>
    </isoform>
</comment>
<comment type="tissue specificity">
    <text evidence="4">High expression in kidney. Up-regulated in lung adenocarcinomas and prostate cancers.</text>
</comment>
<comment type="miscellaneous">
    <text evidence="1">Most adhesion GPCRs undergo autoproteolysis at the GPS domain. ADGRF2 is not autoproteolyzed at the GPS motif because of the lack of a consensus catalytic triad sequence within GPS region of the GAIN-B domain.</text>
</comment>
<comment type="similarity">
    <text evidence="7">Belongs to the G-protein coupled receptor 2 family. Adhesion G-protein coupled receptor (ADGR) subfamily.</text>
</comment>
<comment type="caution">
    <text evidence="7">Could be the product of a pseudogene. Protein coding orthologs in other vertebrate species.</text>
</comment>
<comment type="sequence caution" evidence="7">
    <conflict type="erroneous gene model prediction">
        <sequence resource="EMBL-CDS" id="BAC05907"/>
    </conflict>
</comment>
<name>AGRF2_HUMAN</name>
<gene>
    <name evidence="8" type="primary">ADGRF2P</name>
    <name type="synonym">ADGRF2</name>
    <name type="synonym">GPR111</name>
    <name type="synonym">PGR20</name>
</gene>
<feature type="chain" id="PRO_0000070334" description="Putative adhesion G protein-coupled receptor F2P">
    <location>
        <begin position="1"/>
        <end position="708"/>
    </location>
</feature>
<feature type="topological domain" description="Extracellular" evidence="7">
    <location>
        <begin position="1"/>
        <end position="451"/>
    </location>
</feature>
<feature type="transmembrane region" description="Helical; Name=1" evidence="2">
    <location>
        <begin position="452"/>
        <end position="472"/>
    </location>
</feature>
<feature type="topological domain" description="Cytoplasmic" evidence="7">
    <location>
        <begin position="473"/>
        <end position="487"/>
    </location>
</feature>
<feature type="transmembrane region" description="Helical; Name=2" evidence="2">
    <location>
        <begin position="488"/>
        <end position="508"/>
    </location>
</feature>
<feature type="topological domain" description="Extracellular" evidence="7">
    <location>
        <begin position="509"/>
        <end position="530"/>
    </location>
</feature>
<feature type="transmembrane region" description="Helical; Name=3" evidence="2">
    <location>
        <begin position="531"/>
        <end position="551"/>
    </location>
</feature>
<feature type="topological domain" description="Cytoplasmic" evidence="7">
    <location>
        <begin position="552"/>
        <end position="557"/>
    </location>
</feature>
<feature type="transmembrane region" description="Helical; Name=4" evidence="2">
    <location>
        <begin position="558"/>
        <end position="578"/>
    </location>
</feature>
<feature type="topological domain" description="Extracellular" evidence="7">
    <location>
        <begin position="579"/>
        <end position="606"/>
    </location>
</feature>
<feature type="transmembrane region" description="Helical; Name=5" evidence="2">
    <location>
        <begin position="607"/>
        <end position="627"/>
    </location>
</feature>
<feature type="topological domain" description="Cytoplasmic" evidence="7">
    <location>
        <begin position="628"/>
        <end position="650"/>
    </location>
</feature>
<feature type="transmembrane region" description="Helical; Name=6" evidence="2">
    <location>
        <begin position="651"/>
        <end position="671"/>
    </location>
</feature>
<feature type="topological domain" description="Extracellular" evidence="7">
    <location>
        <begin position="672"/>
        <end position="674"/>
    </location>
</feature>
<feature type="transmembrane region" description="Helical; Name=7" evidence="2">
    <location>
        <begin position="675"/>
        <end position="695"/>
    </location>
</feature>
<feature type="topological domain" description="Cytoplasmic" evidence="7">
    <location>
        <begin position="696"/>
        <end position="708"/>
    </location>
</feature>
<feature type="domain" description="GAIN-B" evidence="3">
    <location>
        <begin position="293"/>
        <end position="442"/>
    </location>
</feature>
<feature type="region of interest" description="GPS" evidence="3">
    <location>
        <begin position="394"/>
        <end position="442"/>
    </location>
</feature>
<feature type="glycosylation site" description="N-linked (GlcNAc...) asparagine" evidence="2">
    <location>
        <position position="21"/>
    </location>
</feature>
<feature type="glycosylation site" description="N-linked (GlcNAc...) asparagine" evidence="2">
    <location>
        <position position="220"/>
    </location>
</feature>
<feature type="glycosylation site" description="N-linked (GlcNAc...) asparagine" evidence="2">
    <location>
        <position position="252"/>
    </location>
</feature>
<feature type="glycosylation site" description="N-linked (GlcNAc...) asparagine" evidence="2">
    <location>
        <position position="260"/>
    </location>
</feature>
<feature type="glycosylation site" description="N-linked (GlcNAc...) asparagine" evidence="2">
    <location>
        <position position="305"/>
    </location>
</feature>
<feature type="glycosylation site" description="N-linked (GlcNAc...) asparagine" evidence="2">
    <location>
        <position position="313"/>
    </location>
</feature>
<feature type="glycosylation site" description="N-linked (GlcNAc...) asparagine" evidence="2">
    <location>
        <position position="358"/>
    </location>
</feature>
<feature type="disulfide bond" evidence="3">
    <location>
        <begin position="394"/>
        <end position="421"/>
    </location>
</feature>
<feature type="disulfide bond" evidence="3">
    <location>
        <begin position="409"/>
        <end position="423"/>
    </location>
</feature>
<feature type="splice variant" id="VSP_040379" description="In isoform 2." evidence="6">
    <location>
        <begin position="1"/>
        <end position="68"/>
    </location>
</feature>
<feature type="splice variant" id="VSP_040380" description="In isoform 2." evidence="6">
    <original>PSPNAVSSDQVHCSAGCTHRKCGW</original>
    <variation>MTHILLLYYLVFLLPTESCRTLYQ</variation>
    <location>
        <begin position="69"/>
        <end position="92"/>
    </location>
</feature>
<feature type="splice variant" id="VSP_040381" description="In isoform 2." evidence="6">
    <original>VSPDASDQVQSERIHEDVL</original>
    <variation>GFFILVFGTILDPKIREALKG</variation>
    <location>
        <begin position="690"/>
        <end position="708"/>
    </location>
</feature>
<feature type="sequence variant" id="VAR_024473" description="In dbSNP:rs6907125.">
    <original>Q</original>
    <variation>R</variation>
    <location>
        <position position="148"/>
    </location>
</feature>
<feature type="sequence variant" id="VAR_024474" description="In dbSNP:rs9381594." evidence="5">
    <original>I</original>
    <variation>V</variation>
    <location>
        <position position="467"/>
    </location>
</feature>
<feature type="sequence conflict" description="In Ref. 3; ABC41928." evidence="7" ref="3">
    <original>K</original>
    <variation>E</variation>
    <location>
        <position position="427"/>
    </location>
</feature>
<reference key="1">
    <citation type="journal article" date="2003" name="Biochem. Biophys. Res. Commun.">
        <title>There exist at least 30 human G-protein-coupled receptors with long Ser/Thr-rich N-termini.</title>
        <authorList>
            <person name="Fredriksson R."/>
            <person name="Gloriam D.E.I."/>
            <person name="Hoeglund P.J."/>
            <person name="Lagerstroem M.C."/>
            <person name="Schioeth H.B."/>
        </authorList>
    </citation>
    <scope>NUCLEOTIDE SEQUENCE [MRNA] (ISOFORM 1)</scope>
</reference>
<reference key="2">
    <citation type="submission" date="2001-07" db="EMBL/GenBank/DDBJ databases">
        <title>Genome-wide discovery and analysis of human seven transmembrane helix receptor genes.</title>
        <authorList>
            <person name="Suwa M."/>
            <person name="Sato T."/>
            <person name="Okouchi I."/>
            <person name="Arita M."/>
            <person name="Futami K."/>
            <person name="Matsumoto S."/>
            <person name="Tsutsumi S."/>
            <person name="Aburatani H."/>
            <person name="Asai K."/>
            <person name="Akiyama Y."/>
        </authorList>
    </citation>
    <scope>NUCLEOTIDE SEQUENCE [GENOMIC DNA] (ISOFORM 1)</scope>
</reference>
<reference key="3">
    <citation type="submission" date="2005-12" db="EMBL/GenBank/DDBJ databases">
        <title>Complete coding sequence of GPR111.</title>
        <authorList>
            <person name="Bonner T.I."/>
            <person name="Kauffman D."/>
            <person name="Nagle J.W."/>
        </authorList>
    </citation>
    <scope>NUCLEOTIDE SEQUENCE [MRNA] (ISOFORM 2)</scope>
    <scope>VARIANT VAL-467</scope>
    <source>
        <tissue>Testis</tissue>
    </source>
</reference>
<reference key="4">
    <citation type="journal article" date="2003" name="Nature">
        <title>The DNA sequence and analysis of human chromosome 6.</title>
        <authorList>
            <person name="Mungall A.J."/>
            <person name="Palmer S.A."/>
            <person name="Sims S.K."/>
            <person name="Edwards C.A."/>
            <person name="Ashurst J.L."/>
            <person name="Wilming L."/>
            <person name="Jones M.C."/>
            <person name="Horton R."/>
            <person name="Hunt S.E."/>
            <person name="Scott C.E."/>
            <person name="Gilbert J.G.R."/>
            <person name="Clamp M.E."/>
            <person name="Bethel G."/>
            <person name="Milne S."/>
            <person name="Ainscough R."/>
            <person name="Almeida J.P."/>
            <person name="Ambrose K.D."/>
            <person name="Andrews T.D."/>
            <person name="Ashwell R.I.S."/>
            <person name="Babbage A.K."/>
            <person name="Bagguley C.L."/>
            <person name="Bailey J."/>
            <person name="Banerjee R."/>
            <person name="Barker D.J."/>
            <person name="Barlow K.F."/>
            <person name="Bates K."/>
            <person name="Beare D.M."/>
            <person name="Beasley H."/>
            <person name="Beasley O."/>
            <person name="Bird C.P."/>
            <person name="Blakey S.E."/>
            <person name="Bray-Allen S."/>
            <person name="Brook J."/>
            <person name="Brown A.J."/>
            <person name="Brown J.Y."/>
            <person name="Burford D.C."/>
            <person name="Burrill W."/>
            <person name="Burton J."/>
            <person name="Carder C."/>
            <person name="Carter N.P."/>
            <person name="Chapman J.C."/>
            <person name="Clark S.Y."/>
            <person name="Clark G."/>
            <person name="Clee C.M."/>
            <person name="Clegg S."/>
            <person name="Cobley V."/>
            <person name="Collier R.E."/>
            <person name="Collins J.E."/>
            <person name="Colman L.K."/>
            <person name="Corby N.R."/>
            <person name="Coville G.J."/>
            <person name="Culley K.M."/>
            <person name="Dhami P."/>
            <person name="Davies J."/>
            <person name="Dunn M."/>
            <person name="Earthrowl M.E."/>
            <person name="Ellington A.E."/>
            <person name="Evans K.A."/>
            <person name="Faulkner L."/>
            <person name="Francis M.D."/>
            <person name="Frankish A."/>
            <person name="Frankland J."/>
            <person name="French L."/>
            <person name="Garner P."/>
            <person name="Garnett J."/>
            <person name="Ghori M.J."/>
            <person name="Gilby L.M."/>
            <person name="Gillson C.J."/>
            <person name="Glithero R.J."/>
            <person name="Grafham D.V."/>
            <person name="Grant M."/>
            <person name="Gribble S."/>
            <person name="Griffiths C."/>
            <person name="Griffiths M.N.D."/>
            <person name="Hall R."/>
            <person name="Halls K.S."/>
            <person name="Hammond S."/>
            <person name="Harley J.L."/>
            <person name="Hart E.A."/>
            <person name="Heath P.D."/>
            <person name="Heathcott R."/>
            <person name="Holmes S.J."/>
            <person name="Howden P.J."/>
            <person name="Howe K.L."/>
            <person name="Howell G.R."/>
            <person name="Huckle E."/>
            <person name="Humphray S.J."/>
            <person name="Humphries M.D."/>
            <person name="Hunt A.R."/>
            <person name="Johnson C.M."/>
            <person name="Joy A.A."/>
            <person name="Kay M."/>
            <person name="Keenan S.J."/>
            <person name="Kimberley A.M."/>
            <person name="King A."/>
            <person name="Laird G.K."/>
            <person name="Langford C."/>
            <person name="Lawlor S."/>
            <person name="Leongamornlert D.A."/>
            <person name="Leversha M."/>
            <person name="Lloyd C.R."/>
            <person name="Lloyd D.M."/>
            <person name="Loveland J.E."/>
            <person name="Lovell J."/>
            <person name="Martin S."/>
            <person name="Mashreghi-Mohammadi M."/>
            <person name="Maslen G.L."/>
            <person name="Matthews L."/>
            <person name="McCann O.T."/>
            <person name="McLaren S.J."/>
            <person name="McLay K."/>
            <person name="McMurray A."/>
            <person name="Moore M.J.F."/>
            <person name="Mullikin J.C."/>
            <person name="Niblett D."/>
            <person name="Nickerson T."/>
            <person name="Novik K.L."/>
            <person name="Oliver K."/>
            <person name="Overton-Larty E.K."/>
            <person name="Parker A."/>
            <person name="Patel R."/>
            <person name="Pearce A.V."/>
            <person name="Peck A.I."/>
            <person name="Phillimore B.J.C.T."/>
            <person name="Phillips S."/>
            <person name="Plumb R.W."/>
            <person name="Porter K.M."/>
            <person name="Ramsey Y."/>
            <person name="Ranby S.A."/>
            <person name="Rice C.M."/>
            <person name="Ross M.T."/>
            <person name="Searle S.M."/>
            <person name="Sehra H.K."/>
            <person name="Sheridan E."/>
            <person name="Skuce C.D."/>
            <person name="Smith S."/>
            <person name="Smith M."/>
            <person name="Spraggon L."/>
            <person name="Squares S.L."/>
            <person name="Steward C.A."/>
            <person name="Sycamore N."/>
            <person name="Tamlyn-Hall G."/>
            <person name="Tester J."/>
            <person name="Theaker A.J."/>
            <person name="Thomas D.W."/>
            <person name="Thorpe A."/>
            <person name="Tracey A."/>
            <person name="Tromans A."/>
            <person name="Tubby B."/>
            <person name="Wall M."/>
            <person name="Wallis J.M."/>
            <person name="West A.P."/>
            <person name="White S.S."/>
            <person name="Whitehead S.L."/>
            <person name="Whittaker H."/>
            <person name="Wild A."/>
            <person name="Willey D.J."/>
            <person name="Wilmer T.E."/>
            <person name="Wood J.M."/>
            <person name="Wray P.W."/>
            <person name="Wyatt J.C."/>
            <person name="Young L."/>
            <person name="Younger R.M."/>
            <person name="Bentley D.R."/>
            <person name="Coulson A."/>
            <person name="Durbin R.M."/>
            <person name="Hubbard T."/>
            <person name="Sulston J.E."/>
            <person name="Dunham I."/>
            <person name="Rogers J."/>
            <person name="Beck S."/>
        </authorList>
    </citation>
    <scope>NUCLEOTIDE SEQUENCE [LARGE SCALE GENOMIC DNA]</scope>
</reference>
<reference key="5">
    <citation type="journal article" date="2002" name="FEBS Lett.">
        <title>Identification of G protein-coupled receptor genes from the human genome sequence.</title>
        <authorList>
            <person name="Takeda S."/>
            <person name="Kadowaki S."/>
            <person name="Haga T."/>
            <person name="Takaesu H."/>
            <person name="Mitaku S."/>
        </authorList>
    </citation>
    <scope>NUCLEOTIDE SEQUENCE [LARGE SCALE GENOMIC DNA] OF 293-708</scope>
</reference>
<reference key="6">
    <citation type="journal article" date="2003" name="Proc. Natl. Acad. Sci. U.S.A.">
        <title>The G protein-coupled receptor repertoires of human and mouse.</title>
        <authorList>
            <person name="Vassilatis D.K."/>
            <person name="Hohmann J.G."/>
            <person name="Zeng H."/>
            <person name="Li F."/>
            <person name="Ranchalis J.E."/>
            <person name="Mortrud M.T."/>
            <person name="Brown A."/>
            <person name="Rodriguez S.S."/>
            <person name="Weller J.R."/>
            <person name="Wright A.C."/>
            <person name="Bergmann J.E."/>
            <person name="Gaitanaris G.A."/>
        </authorList>
    </citation>
    <scope>NUCLEOTIDE SEQUENCE [LARGE SCALE MRNA] OF 326-487 (ISOFORM 1)</scope>
</reference>
<reference key="7">
    <citation type="journal article" date="2010" name="BMC Cancer">
        <title>Orphan receptor GPR110, an oncogene overexpressed in lung and prostate cancer.</title>
        <authorList>
            <person name="Lum A.M."/>
            <person name="Wang B.B."/>
            <person name="Beck-Engeser G.B."/>
            <person name="Li L."/>
            <person name="Channa N."/>
            <person name="Wabl M."/>
        </authorList>
    </citation>
    <scope>TISSUE SPECIFICITY</scope>
</reference>
<reference key="8">
    <citation type="journal article" date="2015" name="Pharmacol. Rev.">
        <title>International union of basic and clinical pharmacology. XCIV. Adhesion G protein-coupled receptors.</title>
        <authorList>
            <person name="Hamann J."/>
            <person name="Aust G."/>
            <person name="Arac D."/>
            <person name="Engel F.B."/>
            <person name="Formstone C."/>
            <person name="Fredriksson R."/>
            <person name="Hall R.A."/>
            <person name="Harty B.L."/>
            <person name="Kirchhoff C."/>
            <person name="Knapp B."/>
            <person name="Krishnan A."/>
            <person name="Liebscher I."/>
            <person name="Lin H.H."/>
            <person name="Martinelli D.C."/>
            <person name="Monk K.R."/>
            <person name="Peeters M.C."/>
            <person name="Piao X."/>
            <person name="Promel S."/>
            <person name="Schoneberg T."/>
            <person name="Schwartz T.W."/>
            <person name="Singer K."/>
            <person name="Stacey M."/>
            <person name="Ushkaryov Y.A."/>
            <person name="Vallon M."/>
            <person name="Wolfrum U."/>
            <person name="Wright M.W."/>
            <person name="Xu L."/>
            <person name="Langenhan T."/>
            <person name="Schioth H.B."/>
        </authorList>
    </citation>
    <scope>NOMENCLATURE</scope>
</reference>
<keyword id="KW-0025">Alternative splicing</keyword>
<keyword id="KW-1015">Disulfide bond</keyword>
<keyword id="KW-0297">G-protein coupled receptor</keyword>
<keyword id="KW-0325">Glycoprotein</keyword>
<keyword id="KW-0472">Membrane</keyword>
<keyword id="KW-0675">Receptor</keyword>
<keyword id="KW-1185">Reference proteome</keyword>
<keyword id="KW-0807">Transducer</keyword>
<keyword id="KW-0812">Transmembrane</keyword>
<keyword id="KW-1133">Transmembrane helix</keyword>
<evidence type="ECO:0000250" key="1">
    <source>
        <dbReference type="UniProtKB" id="E9Q4J9"/>
    </source>
</evidence>
<evidence type="ECO:0000255" key="2"/>
<evidence type="ECO:0000255" key="3">
    <source>
        <dbReference type="PROSITE-ProRule" id="PRU00098"/>
    </source>
</evidence>
<evidence type="ECO:0000269" key="4">
    <source>
    </source>
</evidence>
<evidence type="ECO:0000269" key="5">
    <source ref="3"/>
</evidence>
<evidence type="ECO:0000303" key="6">
    <source ref="3"/>
</evidence>
<evidence type="ECO:0000305" key="7"/>
<evidence type="ECO:0000312" key="8">
    <source>
        <dbReference type="HGNC" id="HGNC:18991"/>
    </source>
</evidence>
<proteinExistence type="uncertain"/>